<proteinExistence type="inferred from homology"/>
<accession>Q39VS5</accession>
<comment type="catalytic activity">
    <reaction evidence="1">
        <text>tRNA(Phe) + L-phenylalanine + ATP = L-phenylalanyl-tRNA(Phe) + AMP + diphosphate + H(+)</text>
        <dbReference type="Rhea" id="RHEA:19413"/>
        <dbReference type="Rhea" id="RHEA-COMP:9668"/>
        <dbReference type="Rhea" id="RHEA-COMP:9699"/>
        <dbReference type="ChEBI" id="CHEBI:15378"/>
        <dbReference type="ChEBI" id="CHEBI:30616"/>
        <dbReference type="ChEBI" id="CHEBI:33019"/>
        <dbReference type="ChEBI" id="CHEBI:58095"/>
        <dbReference type="ChEBI" id="CHEBI:78442"/>
        <dbReference type="ChEBI" id="CHEBI:78531"/>
        <dbReference type="ChEBI" id="CHEBI:456215"/>
        <dbReference type="EC" id="6.1.1.20"/>
    </reaction>
</comment>
<comment type="cofactor">
    <cofactor evidence="1">
        <name>Mg(2+)</name>
        <dbReference type="ChEBI" id="CHEBI:18420"/>
    </cofactor>
    <text evidence="1">Binds 2 magnesium ions per tetramer.</text>
</comment>
<comment type="subunit">
    <text evidence="1">Tetramer of two alpha and two beta subunits.</text>
</comment>
<comment type="subcellular location">
    <subcellularLocation>
        <location evidence="1">Cytoplasm</location>
    </subcellularLocation>
</comment>
<comment type="similarity">
    <text evidence="1">Belongs to the class-II aminoacyl-tRNA synthetase family. Phe-tRNA synthetase alpha subunit type 1 subfamily.</text>
</comment>
<keyword id="KW-0030">Aminoacyl-tRNA synthetase</keyword>
<keyword id="KW-0067">ATP-binding</keyword>
<keyword id="KW-0963">Cytoplasm</keyword>
<keyword id="KW-0436">Ligase</keyword>
<keyword id="KW-0460">Magnesium</keyword>
<keyword id="KW-0479">Metal-binding</keyword>
<keyword id="KW-0547">Nucleotide-binding</keyword>
<keyword id="KW-0648">Protein biosynthesis</keyword>
<keyword id="KW-1185">Reference proteome</keyword>
<name>SYFA_GEOMG</name>
<organism>
    <name type="scientific">Geobacter metallireducens (strain ATCC 53774 / DSM 7210 / GS-15)</name>
    <dbReference type="NCBI Taxonomy" id="269799"/>
    <lineage>
        <taxon>Bacteria</taxon>
        <taxon>Pseudomonadati</taxon>
        <taxon>Thermodesulfobacteriota</taxon>
        <taxon>Desulfuromonadia</taxon>
        <taxon>Geobacterales</taxon>
        <taxon>Geobacteraceae</taxon>
        <taxon>Geobacter</taxon>
    </lineage>
</organism>
<dbReference type="EC" id="6.1.1.20" evidence="1"/>
<dbReference type="EMBL" id="CP000148">
    <property type="protein sequence ID" value="ABB31649.1"/>
    <property type="molecule type" value="Genomic_DNA"/>
</dbReference>
<dbReference type="RefSeq" id="WP_004511652.1">
    <property type="nucleotide sequence ID" value="NC_007517.1"/>
</dbReference>
<dbReference type="SMR" id="Q39VS5"/>
<dbReference type="STRING" id="269799.Gmet_1415"/>
<dbReference type="KEGG" id="gme:Gmet_1415"/>
<dbReference type="eggNOG" id="COG0016">
    <property type="taxonomic scope" value="Bacteria"/>
</dbReference>
<dbReference type="HOGENOM" id="CLU_025086_0_1_7"/>
<dbReference type="Proteomes" id="UP000007073">
    <property type="component" value="Chromosome"/>
</dbReference>
<dbReference type="GO" id="GO:0005737">
    <property type="term" value="C:cytoplasm"/>
    <property type="evidence" value="ECO:0007669"/>
    <property type="project" value="UniProtKB-SubCell"/>
</dbReference>
<dbReference type="GO" id="GO:0005524">
    <property type="term" value="F:ATP binding"/>
    <property type="evidence" value="ECO:0007669"/>
    <property type="project" value="UniProtKB-UniRule"/>
</dbReference>
<dbReference type="GO" id="GO:0000287">
    <property type="term" value="F:magnesium ion binding"/>
    <property type="evidence" value="ECO:0007669"/>
    <property type="project" value="UniProtKB-UniRule"/>
</dbReference>
<dbReference type="GO" id="GO:0004826">
    <property type="term" value="F:phenylalanine-tRNA ligase activity"/>
    <property type="evidence" value="ECO:0007669"/>
    <property type="project" value="UniProtKB-UniRule"/>
</dbReference>
<dbReference type="GO" id="GO:0000049">
    <property type="term" value="F:tRNA binding"/>
    <property type="evidence" value="ECO:0007669"/>
    <property type="project" value="InterPro"/>
</dbReference>
<dbReference type="GO" id="GO:0006432">
    <property type="term" value="P:phenylalanyl-tRNA aminoacylation"/>
    <property type="evidence" value="ECO:0007669"/>
    <property type="project" value="UniProtKB-UniRule"/>
</dbReference>
<dbReference type="CDD" id="cd00496">
    <property type="entry name" value="PheRS_alpha_core"/>
    <property type="match status" value="1"/>
</dbReference>
<dbReference type="FunFam" id="3.30.930.10:FF:000003">
    <property type="entry name" value="Phenylalanine--tRNA ligase alpha subunit"/>
    <property type="match status" value="1"/>
</dbReference>
<dbReference type="Gene3D" id="3.30.930.10">
    <property type="entry name" value="Bira Bifunctional Protein, Domain 2"/>
    <property type="match status" value="1"/>
</dbReference>
<dbReference type="HAMAP" id="MF_00281">
    <property type="entry name" value="Phe_tRNA_synth_alpha1"/>
    <property type="match status" value="1"/>
</dbReference>
<dbReference type="InterPro" id="IPR006195">
    <property type="entry name" value="aa-tRNA-synth_II"/>
</dbReference>
<dbReference type="InterPro" id="IPR045864">
    <property type="entry name" value="aa-tRNA-synth_II/BPL/LPL"/>
</dbReference>
<dbReference type="InterPro" id="IPR004529">
    <property type="entry name" value="Phe-tRNA-synth_IIc_asu"/>
</dbReference>
<dbReference type="InterPro" id="IPR004188">
    <property type="entry name" value="Phe-tRNA_ligase_II_N"/>
</dbReference>
<dbReference type="InterPro" id="IPR022911">
    <property type="entry name" value="Phe_tRNA_ligase_alpha1_bac"/>
</dbReference>
<dbReference type="InterPro" id="IPR002319">
    <property type="entry name" value="Phenylalanyl-tRNA_Synthase"/>
</dbReference>
<dbReference type="InterPro" id="IPR010978">
    <property type="entry name" value="tRNA-bd_arm"/>
</dbReference>
<dbReference type="NCBIfam" id="TIGR00468">
    <property type="entry name" value="pheS"/>
    <property type="match status" value="1"/>
</dbReference>
<dbReference type="PANTHER" id="PTHR11538:SF41">
    <property type="entry name" value="PHENYLALANINE--TRNA LIGASE, MITOCHONDRIAL"/>
    <property type="match status" value="1"/>
</dbReference>
<dbReference type="PANTHER" id="PTHR11538">
    <property type="entry name" value="PHENYLALANYL-TRNA SYNTHETASE"/>
    <property type="match status" value="1"/>
</dbReference>
<dbReference type="Pfam" id="PF02912">
    <property type="entry name" value="Phe_tRNA-synt_N"/>
    <property type="match status" value="1"/>
</dbReference>
<dbReference type="Pfam" id="PF01409">
    <property type="entry name" value="tRNA-synt_2d"/>
    <property type="match status" value="1"/>
</dbReference>
<dbReference type="SUPFAM" id="SSF55681">
    <property type="entry name" value="Class II aaRS and biotin synthetases"/>
    <property type="match status" value="1"/>
</dbReference>
<dbReference type="SUPFAM" id="SSF46589">
    <property type="entry name" value="tRNA-binding arm"/>
    <property type="match status" value="1"/>
</dbReference>
<dbReference type="PROSITE" id="PS50862">
    <property type="entry name" value="AA_TRNA_LIGASE_II"/>
    <property type="match status" value="1"/>
</dbReference>
<evidence type="ECO:0000255" key="1">
    <source>
        <dbReference type="HAMAP-Rule" id="MF_00281"/>
    </source>
</evidence>
<sequence>MKEQLDGLLQSALKEIDGAGSEEALQELRIKYLGKKGALTAVMKGLGALSAEERPVVGQLANTVKDQLEAHLDETLAQVRDASKRERLQRERLDVTLPGRRLPHGTKHPITLVIEEISEIFAGLGFRVAEGPEVELDFYNFEALNFPKDHPARDMQDTFFVDDSILLRTHTSPVQVRTMLKHAPPVRIISPGTVYRCDSDATHSPMFHQIEGLMVDTGVTFGDLKGILTNFVNQYFGKGIGVRLRPSFFPFTEPSAEVDIACVMCKGKGCRVCKESGWLEILGAGMIDPEVYRHVGYDPETISGFAFGMGVERVAMLKYGIGDLRLFFDNDVRFLQQF</sequence>
<reference key="1">
    <citation type="journal article" date="2009" name="BMC Microbiol.">
        <title>The genome sequence of Geobacter metallireducens: features of metabolism, physiology and regulation common and dissimilar to Geobacter sulfurreducens.</title>
        <authorList>
            <person name="Aklujkar M."/>
            <person name="Krushkal J."/>
            <person name="DiBartolo G."/>
            <person name="Lapidus A."/>
            <person name="Land M.L."/>
            <person name="Lovley D.R."/>
        </authorList>
    </citation>
    <scope>NUCLEOTIDE SEQUENCE [LARGE SCALE GENOMIC DNA]</scope>
    <source>
        <strain>ATCC 53774 / DSM 7210 / GS-15</strain>
    </source>
</reference>
<feature type="chain" id="PRO_0000231984" description="Phenylalanine--tRNA ligase alpha subunit">
    <location>
        <begin position="1"/>
        <end position="338"/>
    </location>
</feature>
<feature type="binding site" evidence="1">
    <location>
        <position position="253"/>
    </location>
    <ligand>
        <name>Mg(2+)</name>
        <dbReference type="ChEBI" id="CHEBI:18420"/>
        <note>shared with beta subunit</note>
    </ligand>
</feature>
<gene>
    <name evidence="1" type="primary">pheS</name>
    <name type="ordered locus">Gmet_1415</name>
</gene>
<protein>
    <recommendedName>
        <fullName evidence="1">Phenylalanine--tRNA ligase alpha subunit</fullName>
        <ecNumber evidence="1">6.1.1.20</ecNumber>
    </recommendedName>
    <alternativeName>
        <fullName evidence="1">Phenylalanyl-tRNA synthetase alpha subunit</fullName>
        <shortName evidence="1">PheRS</shortName>
    </alternativeName>
</protein>